<keyword id="KW-0002">3D-structure</keyword>
<keyword id="KW-0042">Antenna complex</keyword>
<keyword id="KW-0076">Bacteriochlorophyll</keyword>
<keyword id="KW-0997">Cell inner membrane</keyword>
<keyword id="KW-1003">Cell membrane</keyword>
<keyword id="KW-0148">Chlorophyll</keyword>
<keyword id="KW-0157">Chromophore</keyword>
<keyword id="KW-0437">Light-harvesting polypeptide</keyword>
<keyword id="KW-0460">Magnesium</keyword>
<keyword id="KW-0472">Membrane</keyword>
<keyword id="KW-0479">Metal-binding</keyword>
<keyword id="KW-1185">Reference proteome</keyword>
<keyword id="KW-0812">Transmembrane</keyword>
<keyword id="KW-1133">Transmembrane helix</keyword>
<accession>Q3J1A4</accession>
<accession>P02949</accession>
<evidence type="ECO:0000255" key="1"/>
<evidence type="ECO:0000305" key="2"/>
<evidence type="ECO:0007829" key="3">
    <source>
        <dbReference type="PDB" id="7VNY"/>
    </source>
</evidence>
<comment type="function">
    <text>Antenna complexes are light-harvesting systems, which transfer the excitation energy to the reaction centers.</text>
</comment>
<comment type="subunit">
    <text>The core complex is formed by different alpha and beta chains, binding bacteriochlorophyll molecules, and arranged most probably in tetrameric structures disposed around the reaction center. The non-pigmented gamma chains may constitute additional components.</text>
</comment>
<comment type="subcellular location">
    <subcellularLocation>
        <location>Cell inner membrane</location>
        <topology>Single-pass type II membrane protein</topology>
    </subcellularLocation>
</comment>
<comment type="similarity">
    <text evidence="2">Belongs to the antenna complex alpha subunit family.</text>
</comment>
<sequence length="58" mass="6809">MSKFYKIWMIFDPRRVFVAQGVFLFLLAVMIHLILLSTPSYNWLEISAAKYNRVAVAE</sequence>
<feature type="chain" id="PRO_0000099802" description="Light-harvesting protein B-875 alpha chain">
    <location>
        <begin position="1"/>
        <end position="58"/>
    </location>
</feature>
<feature type="topological domain" description="Cytoplasmic" evidence="1">
    <location>
        <begin position="1"/>
        <end position="15"/>
    </location>
</feature>
<feature type="transmembrane region" description="Helical" evidence="1">
    <location>
        <begin position="16"/>
        <end position="36"/>
    </location>
</feature>
<feature type="topological domain" description="Periplasmic" evidence="1">
    <location>
        <begin position="37"/>
        <end position="58"/>
    </location>
</feature>
<feature type="binding site" description="axial binding residue" evidence="1">
    <location>
        <position position="32"/>
    </location>
    <ligand>
        <name>a bacteriochlorophyll</name>
        <dbReference type="ChEBI" id="CHEBI:38201"/>
    </ligand>
    <ligandPart>
        <name>Mg</name>
        <dbReference type="ChEBI" id="CHEBI:25107"/>
    </ligandPart>
</feature>
<feature type="helix" evidence="3">
    <location>
        <begin position="4"/>
        <end position="9"/>
    </location>
</feature>
<feature type="helix" evidence="3">
    <location>
        <begin position="13"/>
        <end position="36"/>
    </location>
</feature>
<feature type="strand" evidence="3">
    <location>
        <begin position="38"/>
        <end position="41"/>
    </location>
</feature>
<feature type="turn" evidence="3">
    <location>
        <begin position="43"/>
        <end position="45"/>
    </location>
</feature>
<feature type="helix" evidence="3">
    <location>
        <begin position="47"/>
        <end position="50"/>
    </location>
</feature>
<name>LHA1_CERS4</name>
<reference key="1">
    <citation type="journal article" date="1987" name="J. Bacteriol.">
        <title>DNA sequence and in vitro expression of the B875 light-harvesting polypeptides of Rhodobacter sphaeroides.</title>
        <authorList>
            <person name="Kiley P.J."/>
            <person name="Donohue T.J."/>
            <person name="Havelka W.A."/>
            <person name="Kaplan S."/>
        </authorList>
    </citation>
    <scope>NUCLEOTIDE SEQUENCE [GENOMIC DNA]</scope>
</reference>
<reference key="2">
    <citation type="journal article" date="2000" name="Nucleic Acids Res.">
        <title>DNA sequence analysis of the photosynthesis region of Rhodobacter sphaeroides 2.4.1.</title>
        <authorList>
            <person name="Choudhary M."/>
            <person name="Kaplan S."/>
        </authorList>
    </citation>
    <scope>NUCLEOTIDE SEQUENCE [GENOMIC DNA]</scope>
</reference>
<reference key="3">
    <citation type="submission" date="2005-09" db="EMBL/GenBank/DDBJ databases">
        <title>Complete sequence of chromosome 1 of Rhodobacter sphaeroides 2.4.1.</title>
        <authorList>
            <person name="Copeland A."/>
            <person name="Lucas S."/>
            <person name="Lapidus A."/>
            <person name="Barry K."/>
            <person name="Detter J.C."/>
            <person name="Glavina T."/>
            <person name="Hammon N."/>
            <person name="Israni S."/>
            <person name="Pitluck S."/>
            <person name="Richardson P."/>
            <person name="Mackenzie C."/>
            <person name="Choudhary M."/>
            <person name="Larimer F."/>
            <person name="Hauser L.J."/>
            <person name="Land M."/>
            <person name="Donohue T.J."/>
            <person name="Kaplan S."/>
        </authorList>
    </citation>
    <scope>NUCLEOTIDE SEQUENCE [LARGE SCALE GENOMIC DNA]</scope>
    <source>
        <strain>ATCC 17023 / DSM 158 / JCM 6121 / CCUG 31486 / LMG 2827 / NBRC 12203 / NCIMB 8253 / ATH 2.4.1.</strain>
    </source>
</reference>
<protein>
    <recommendedName>
        <fullName>Light-harvesting protein B-875 alpha chain</fullName>
    </recommendedName>
    <alternativeName>
        <fullName>Antenna pigment protein alpha chain</fullName>
    </alternativeName>
    <alternativeName>
        <fullName>LH-1</fullName>
    </alternativeName>
</protein>
<organism>
    <name type="scientific">Cereibacter sphaeroides (strain ATCC 17023 / DSM 158 / JCM 6121 / CCUG 31486 / LMG 2827 / NBRC 12203 / NCIMB 8253 / ATH 2.4.1.)</name>
    <name type="common">Rhodobacter sphaeroides</name>
    <dbReference type="NCBI Taxonomy" id="272943"/>
    <lineage>
        <taxon>Bacteria</taxon>
        <taxon>Pseudomonadati</taxon>
        <taxon>Pseudomonadota</taxon>
        <taxon>Alphaproteobacteria</taxon>
        <taxon>Rhodobacterales</taxon>
        <taxon>Paracoccaceae</taxon>
        <taxon>Cereibacter</taxon>
    </lineage>
</organism>
<dbReference type="EMBL" id="M15105">
    <property type="protein sequence ID" value="AAA26167.1"/>
    <property type="molecule type" value="Genomic_DNA"/>
</dbReference>
<dbReference type="EMBL" id="AF195122">
    <property type="protein sequence ID" value="AAF24303.1"/>
    <property type="molecule type" value="Genomic_DNA"/>
</dbReference>
<dbReference type="EMBL" id="CP000143">
    <property type="protein sequence ID" value="ABA79430.1"/>
    <property type="molecule type" value="Genomic_DNA"/>
</dbReference>
<dbReference type="PIR" id="A27760">
    <property type="entry name" value="LBRF1S"/>
</dbReference>
<dbReference type="RefSeq" id="WP_002720422.1">
    <property type="nucleotide sequence ID" value="NZ_CP030271.1"/>
</dbReference>
<dbReference type="RefSeq" id="YP_353331.1">
    <property type="nucleotide sequence ID" value="NC_007493.2"/>
</dbReference>
<dbReference type="PDB" id="7F0L">
    <property type="method" value="EM"/>
    <property type="resolution" value="2.94 A"/>
    <property type="chains" value="1/3/5/7/A/D/F/I/K/O/Q/S/V/Y=1-54"/>
</dbReference>
<dbReference type="PDB" id="7PIL">
    <property type="method" value="EM"/>
    <property type="resolution" value="2.50 A"/>
    <property type="chains" value="AA/AB/AC/AD/AE/AF/AG/AH/AI/AJ/AK/AL/AM/AN=1-55"/>
</dbReference>
<dbReference type="PDB" id="7VA9">
    <property type="method" value="EM"/>
    <property type="resolution" value="3.08 A"/>
    <property type="chains" value="1/3/5/6/7/9/A/D/F/I/K/O/Q/S/U/W/Y/a/d/f/i/k/o/q/s/u/w/y=1-58"/>
</dbReference>
<dbReference type="PDB" id="7VB9">
    <property type="method" value="EM"/>
    <property type="resolution" value="3.45 A"/>
    <property type="chains" value="5/6/7/9/A/D/F/I/K/O/Q/a/d/f/i/k/o/q/s/u/w/y=1-58"/>
</dbReference>
<dbReference type="PDB" id="7VNM">
    <property type="method" value="EM"/>
    <property type="resolution" value="2.86 A"/>
    <property type="chains" value="1/7/9/A/D/F/I/K/O/Q/S/U/W=1-58"/>
</dbReference>
<dbReference type="PDB" id="7VNY">
    <property type="method" value="EM"/>
    <property type="resolution" value="2.79 A"/>
    <property type="chains" value="1/3/7/9/A/D/F/I/K/O/Q/S/U/W=1-58"/>
</dbReference>
<dbReference type="PDB" id="7VOR">
    <property type="method" value="EM"/>
    <property type="resolution" value="2.74 A"/>
    <property type="chains" value="1/3/5/6/7/9/A/D/F/I/K/O/Q/S/U/W/a/b1/b9/d/f/i/k/o/q/s/u/w=1-58"/>
</dbReference>
<dbReference type="PDB" id="7VOT">
    <property type="method" value="EM"/>
    <property type="resolution" value="2.90 A"/>
    <property type="chains" value="1/3/5/6/7/9/A/D/F/I/K/O/Q/S/U/W/a/b1/b9/d/f/i/k/o/q/s/u/w=1-58"/>
</dbReference>
<dbReference type="PDB" id="7VOY">
    <property type="method" value="EM"/>
    <property type="resolution" value="4.20 A"/>
    <property type="chains" value="1/4/6/7/9/A/C/D/F/I/K/O/Q/S/U/W/Y=1-58"/>
</dbReference>
<dbReference type="PDBsum" id="7F0L"/>
<dbReference type="PDBsum" id="7PIL"/>
<dbReference type="PDBsum" id="7VA9"/>
<dbReference type="PDBsum" id="7VB9"/>
<dbReference type="PDBsum" id="7VNM"/>
<dbReference type="PDBsum" id="7VNY"/>
<dbReference type="PDBsum" id="7VOR"/>
<dbReference type="PDBsum" id="7VOT"/>
<dbReference type="PDBsum" id="7VOY"/>
<dbReference type="EMDB" id="EMD-13441"/>
<dbReference type="EMDB" id="EMD-31835"/>
<dbReference type="EMDB" id="EMD-31875"/>
<dbReference type="EMDB" id="EMD-32042"/>
<dbReference type="EMDB" id="EMD-32047"/>
<dbReference type="EMDB" id="EMD-32058"/>
<dbReference type="EMDB" id="EMD-32059"/>
<dbReference type="EMDB" id="EMD-32062"/>
<dbReference type="SMR" id="Q3J1A4"/>
<dbReference type="STRING" id="272943.RSP_0258"/>
<dbReference type="EnsemblBacteria" id="ABA79430">
    <property type="protein sequence ID" value="ABA79430"/>
    <property type="gene ID" value="RSP_0258"/>
</dbReference>
<dbReference type="GeneID" id="67446991"/>
<dbReference type="KEGG" id="rsp:RSP_0258"/>
<dbReference type="PATRIC" id="fig|272943.9.peg.2201"/>
<dbReference type="eggNOG" id="ENOG5033BSN">
    <property type="taxonomic scope" value="Bacteria"/>
</dbReference>
<dbReference type="OrthoDB" id="8564165at2"/>
<dbReference type="PhylomeDB" id="Q3J1A4"/>
<dbReference type="Proteomes" id="UP000002703">
    <property type="component" value="Chromosome 1"/>
</dbReference>
<dbReference type="GO" id="GO:0019866">
    <property type="term" value="C:organelle inner membrane"/>
    <property type="evidence" value="ECO:0007669"/>
    <property type="project" value="InterPro"/>
</dbReference>
<dbReference type="GO" id="GO:0005886">
    <property type="term" value="C:plasma membrane"/>
    <property type="evidence" value="ECO:0007669"/>
    <property type="project" value="UniProtKB-SubCell"/>
</dbReference>
<dbReference type="GO" id="GO:0030077">
    <property type="term" value="C:plasma membrane light-harvesting complex"/>
    <property type="evidence" value="ECO:0007669"/>
    <property type="project" value="InterPro"/>
</dbReference>
<dbReference type="GO" id="GO:0042314">
    <property type="term" value="F:bacteriochlorophyll binding"/>
    <property type="evidence" value="ECO:0007669"/>
    <property type="project" value="UniProtKB-KW"/>
</dbReference>
<dbReference type="GO" id="GO:0045156">
    <property type="term" value="F:electron transporter, transferring electrons within the cyclic electron transport pathway of photosynthesis activity"/>
    <property type="evidence" value="ECO:0007669"/>
    <property type="project" value="InterPro"/>
</dbReference>
<dbReference type="GO" id="GO:0046872">
    <property type="term" value="F:metal ion binding"/>
    <property type="evidence" value="ECO:0007669"/>
    <property type="project" value="UniProtKB-KW"/>
</dbReference>
<dbReference type="GO" id="GO:0019684">
    <property type="term" value="P:photosynthesis, light reaction"/>
    <property type="evidence" value="ECO:0007669"/>
    <property type="project" value="InterPro"/>
</dbReference>
<dbReference type="Gene3D" id="4.10.220.20">
    <property type="entry name" value="Light-harvesting complex"/>
    <property type="match status" value="1"/>
</dbReference>
<dbReference type="InterPro" id="IPR000066">
    <property type="entry name" value="Antenna_a/b"/>
</dbReference>
<dbReference type="InterPro" id="IPR018332">
    <property type="entry name" value="Antenna_alpha"/>
</dbReference>
<dbReference type="InterPro" id="IPR002361">
    <property type="entry name" value="Antenna_alpha_CS"/>
</dbReference>
<dbReference type="InterPro" id="IPR035889">
    <property type="entry name" value="Light-harvesting_complex"/>
</dbReference>
<dbReference type="NCBIfam" id="NF040861">
    <property type="entry name" value="pufA_517_ASD"/>
    <property type="match status" value="1"/>
</dbReference>
<dbReference type="Pfam" id="PF00556">
    <property type="entry name" value="LHC"/>
    <property type="match status" value="1"/>
</dbReference>
<dbReference type="PRINTS" id="PR00673">
    <property type="entry name" value="LIGHTHARVSTA"/>
</dbReference>
<dbReference type="SUPFAM" id="SSF56918">
    <property type="entry name" value="Light-harvesting complex subunits"/>
    <property type="match status" value="1"/>
</dbReference>
<dbReference type="PROSITE" id="PS00968">
    <property type="entry name" value="ANTENNA_COMP_ALPHA"/>
    <property type="match status" value="1"/>
</dbReference>
<gene>
    <name type="primary">pufA</name>
    <name type="ordered locus">RHOS4_18620</name>
    <name type="ORF">RSP_0258</name>
</gene>
<proteinExistence type="evidence at protein level"/>